<feature type="chain" id="PRO_1000120701" description="Small ribosomal subunit protein bS6">
    <location>
        <begin position="1"/>
        <end position="126"/>
    </location>
</feature>
<feature type="region of interest" description="Disordered" evidence="2">
    <location>
        <begin position="101"/>
        <end position="126"/>
    </location>
</feature>
<feature type="compositionally biased region" description="Basic and acidic residues" evidence="2">
    <location>
        <begin position="104"/>
        <end position="126"/>
    </location>
</feature>
<dbReference type="EMBL" id="FM178379">
    <property type="protein sequence ID" value="CAQ80450.1"/>
    <property type="molecule type" value="Genomic_DNA"/>
</dbReference>
<dbReference type="RefSeq" id="WP_012551202.1">
    <property type="nucleotide sequence ID" value="NC_011312.1"/>
</dbReference>
<dbReference type="SMR" id="B6EMP6"/>
<dbReference type="KEGG" id="vsa:VSAL_I2766"/>
<dbReference type="eggNOG" id="COG0360">
    <property type="taxonomic scope" value="Bacteria"/>
</dbReference>
<dbReference type="HOGENOM" id="CLU_113441_6_1_6"/>
<dbReference type="Proteomes" id="UP000001730">
    <property type="component" value="Chromosome 1"/>
</dbReference>
<dbReference type="GO" id="GO:0022627">
    <property type="term" value="C:cytosolic small ribosomal subunit"/>
    <property type="evidence" value="ECO:0007669"/>
    <property type="project" value="TreeGrafter"/>
</dbReference>
<dbReference type="GO" id="GO:0070181">
    <property type="term" value="F:small ribosomal subunit rRNA binding"/>
    <property type="evidence" value="ECO:0007669"/>
    <property type="project" value="TreeGrafter"/>
</dbReference>
<dbReference type="GO" id="GO:0003735">
    <property type="term" value="F:structural constituent of ribosome"/>
    <property type="evidence" value="ECO:0007669"/>
    <property type="project" value="InterPro"/>
</dbReference>
<dbReference type="GO" id="GO:0006412">
    <property type="term" value="P:translation"/>
    <property type="evidence" value="ECO:0007669"/>
    <property type="project" value="UniProtKB-UniRule"/>
</dbReference>
<dbReference type="CDD" id="cd00473">
    <property type="entry name" value="bS6"/>
    <property type="match status" value="1"/>
</dbReference>
<dbReference type="FunFam" id="3.30.70.60:FF:000003">
    <property type="entry name" value="30S ribosomal protein S6"/>
    <property type="match status" value="1"/>
</dbReference>
<dbReference type="Gene3D" id="3.30.70.60">
    <property type="match status" value="1"/>
</dbReference>
<dbReference type="HAMAP" id="MF_00360">
    <property type="entry name" value="Ribosomal_bS6"/>
    <property type="match status" value="1"/>
</dbReference>
<dbReference type="InterPro" id="IPR000529">
    <property type="entry name" value="Ribosomal_bS6"/>
</dbReference>
<dbReference type="InterPro" id="IPR035980">
    <property type="entry name" value="Ribosomal_bS6_sf"/>
</dbReference>
<dbReference type="InterPro" id="IPR020814">
    <property type="entry name" value="Ribosomal_S6_plastid/chlpt"/>
</dbReference>
<dbReference type="InterPro" id="IPR014717">
    <property type="entry name" value="Transl_elong_EF1B/ribsomal_bS6"/>
</dbReference>
<dbReference type="NCBIfam" id="TIGR00166">
    <property type="entry name" value="S6"/>
    <property type="match status" value="1"/>
</dbReference>
<dbReference type="PANTHER" id="PTHR21011">
    <property type="entry name" value="MITOCHONDRIAL 28S RIBOSOMAL PROTEIN S6"/>
    <property type="match status" value="1"/>
</dbReference>
<dbReference type="PANTHER" id="PTHR21011:SF1">
    <property type="entry name" value="SMALL RIBOSOMAL SUBUNIT PROTEIN BS6M"/>
    <property type="match status" value="1"/>
</dbReference>
<dbReference type="Pfam" id="PF01250">
    <property type="entry name" value="Ribosomal_S6"/>
    <property type="match status" value="1"/>
</dbReference>
<dbReference type="SUPFAM" id="SSF54995">
    <property type="entry name" value="Ribosomal protein S6"/>
    <property type="match status" value="1"/>
</dbReference>
<name>RS6_ALISL</name>
<gene>
    <name evidence="1" type="primary">rpsF</name>
    <name type="ordered locus">VSAL_I2766</name>
</gene>
<reference key="1">
    <citation type="journal article" date="2008" name="BMC Genomics">
        <title>The genome sequence of the fish pathogen Aliivibrio salmonicida strain LFI1238 shows extensive evidence of gene decay.</title>
        <authorList>
            <person name="Hjerde E."/>
            <person name="Lorentzen M.S."/>
            <person name="Holden M.T."/>
            <person name="Seeger K."/>
            <person name="Paulsen S."/>
            <person name="Bason N."/>
            <person name="Churcher C."/>
            <person name="Harris D."/>
            <person name="Norbertczak H."/>
            <person name="Quail M.A."/>
            <person name="Sanders S."/>
            <person name="Thurston S."/>
            <person name="Parkhill J."/>
            <person name="Willassen N.P."/>
            <person name="Thomson N.R."/>
        </authorList>
    </citation>
    <scope>NUCLEOTIDE SEQUENCE [LARGE SCALE GENOMIC DNA]</scope>
    <source>
        <strain>LFI1238</strain>
    </source>
</reference>
<sequence length="126" mass="14452">MRHYEIVFMVHPDQSEQVAGMIERYTGSITEAGGTIHRLEDWGRRQMAYPINKLHKAHYVLMNVESEQAAIDELETAFRYNDAVLRNMIMRTKAAITEPSVMMKAKEERTAKREDAAPRAEEAAAE</sequence>
<organism>
    <name type="scientific">Aliivibrio salmonicida (strain LFI1238)</name>
    <name type="common">Vibrio salmonicida (strain LFI1238)</name>
    <dbReference type="NCBI Taxonomy" id="316275"/>
    <lineage>
        <taxon>Bacteria</taxon>
        <taxon>Pseudomonadati</taxon>
        <taxon>Pseudomonadota</taxon>
        <taxon>Gammaproteobacteria</taxon>
        <taxon>Vibrionales</taxon>
        <taxon>Vibrionaceae</taxon>
        <taxon>Aliivibrio</taxon>
    </lineage>
</organism>
<protein>
    <recommendedName>
        <fullName evidence="1">Small ribosomal subunit protein bS6</fullName>
    </recommendedName>
    <alternativeName>
        <fullName evidence="3">30S ribosomal protein S6</fullName>
    </alternativeName>
</protein>
<accession>B6EMP6</accession>
<proteinExistence type="inferred from homology"/>
<comment type="function">
    <text evidence="1">Binds together with bS18 to 16S ribosomal RNA.</text>
</comment>
<comment type="similarity">
    <text evidence="1">Belongs to the bacterial ribosomal protein bS6 family.</text>
</comment>
<keyword id="KW-0687">Ribonucleoprotein</keyword>
<keyword id="KW-0689">Ribosomal protein</keyword>
<keyword id="KW-0694">RNA-binding</keyword>
<keyword id="KW-0699">rRNA-binding</keyword>
<evidence type="ECO:0000255" key="1">
    <source>
        <dbReference type="HAMAP-Rule" id="MF_00360"/>
    </source>
</evidence>
<evidence type="ECO:0000256" key="2">
    <source>
        <dbReference type="SAM" id="MobiDB-lite"/>
    </source>
</evidence>
<evidence type="ECO:0000305" key="3"/>